<name>EUTC_SALDC</name>
<dbReference type="EC" id="4.3.1.7" evidence="1"/>
<dbReference type="EMBL" id="CP001144">
    <property type="protein sequence ID" value="ACH73685.1"/>
    <property type="molecule type" value="Genomic_DNA"/>
</dbReference>
<dbReference type="RefSeq" id="WP_000372354.1">
    <property type="nucleotide sequence ID" value="NC_011205.1"/>
</dbReference>
<dbReference type="SMR" id="B5FQF0"/>
<dbReference type="KEGG" id="sed:SeD_A2824"/>
<dbReference type="HOGENOM" id="CLU_068224_2_0_6"/>
<dbReference type="UniPathway" id="UPA00560"/>
<dbReference type="Proteomes" id="UP000008322">
    <property type="component" value="Chromosome"/>
</dbReference>
<dbReference type="GO" id="GO:0009350">
    <property type="term" value="C:ethanolamine ammonia-lyase complex"/>
    <property type="evidence" value="ECO:0007669"/>
    <property type="project" value="UniProtKB-UniRule"/>
</dbReference>
<dbReference type="GO" id="GO:0031471">
    <property type="term" value="C:ethanolamine degradation polyhedral organelle"/>
    <property type="evidence" value="ECO:0007669"/>
    <property type="project" value="UniProtKB-UniRule"/>
</dbReference>
<dbReference type="GO" id="GO:0031419">
    <property type="term" value="F:cobalamin binding"/>
    <property type="evidence" value="ECO:0007669"/>
    <property type="project" value="UniProtKB-UniRule"/>
</dbReference>
<dbReference type="GO" id="GO:0008851">
    <property type="term" value="F:ethanolamine ammonia-lyase activity"/>
    <property type="evidence" value="ECO:0007669"/>
    <property type="project" value="UniProtKB-UniRule"/>
</dbReference>
<dbReference type="GO" id="GO:0006520">
    <property type="term" value="P:amino acid metabolic process"/>
    <property type="evidence" value="ECO:0007669"/>
    <property type="project" value="InterPro"/>
</dbReference>
<dbReference type="GO" id="GO:0046336">
    <property type="term" value="P:ethanolamine catabolic process"/>
    <property type="evidence" value="ECO:0007669"/>
    <property type="project" value="UniProtKB-UniRule"/>
</dbReference>
<dbReference type="FunFam" id="3.40.50.11240:FF:000001">
    <property type="entry name" value="Ethanolamine ammonia-lyase light chain"/>
    <property type="match status" value="1"/>
</dbReference>
<dbReference type="Gene3D" id="6.10.140.690">
    <property type="match status" value="1"/>
</dbReference>
<dbReference type="Gene3D" id="6.10.250.2060">
    <property type="match status" value="1"/>
</dbReference>
<dbReference type="Gene3D" id="3.40.50.11240">
    <property type="entry name" value="Ethanolamine ammonia-lyase light chain (EutC)"/>
    <property type="match status" value="1"/>
</dbReference>
<dbReference type="HAMAP" id="MF_00601">
    <property type="entry name" value="EutC"/>
    <property type="match status" value="1"/>
</dbReference>
<dbReference type="InterPro" id="IPR009246">
    <property type="entry name" value="EutC"/>
</dbReference>
<dbReference type="InterPro" id="IPR042251">
    <property type="entry name" value="EutC_C"/>
</dbReference>
<dbReference type="NCBIfam" id="NF003971">
    <property type="entry name" value="PRK05465.1"/>
    <property type="match status" value="1"/>
</dbReference>
<dbReference type="PANTHER" id="PTHR39330">
    <property type="entry name" value="ETHANOLAMINE AMMONIA-LYASE LIGHT CHAIN"/>
    <property type="match status" value="1"/>
</dbReference>
<dbReference type="PANTHER" id="PTHR39330:SF1">
    <property type="entry name" value="ETHANOLAMINE AMMONIA-LYASE SMALL SUBUNIT"/>
    <property type="match status" value="1"/>
</dbReference>
<dbReference type="Pfam" id="PF05985">
    <property type="entry name" value="EutC"/>
    <property type="match status" value="1"/>
</dbReference>
<dbReference type="PIRSF" id="PIRSF018982">
    <property type="entry name" value="EutC"/>
    <property type="match status" value="1"/>
</dbReference>
<evidence type="ECO:0000255" key="1">
    <source>
        <dbReference type="HAMAP-Rule" id="MF_00601"/>
    </source>
</evidence>
<protein>
    <recommendedName>
        <fullName evidence="1">Ethanolamine ammonia-lyase small subunit</fullName>
        <shortName evidence="1">EAL small subunit</shortName>
        <ecNumber evidence="1">4.3.1.7</ecNumber>
    </recommendedName>
</protein>
<reference key="1">
    <citation type="journal article" date="2011" name="J. Bacteriol.">
        <title>Comparative genomics of 28 Salmonella enterica isolates: evidence for CRISPR-mediated adaptive sublineage evolution.</title>
        <authorList>
            <person name="Fricke W.F."/>
            <person name="Mammel M.K."/>
            <person name="McDermott P.F."/>
            <person name="Tartera C."/>
            <person name="White D.G."/>
            <person name="Leclerc J.E."/>
            <person name="Ravel J."/>
            <person name="Cebula T.A."/>
        </authorList>
    </citation>
    <scope>NUCLEOTIDE SEQUENCE [LARGE SCALE GENOMIC DNA]</scope>
    <source>
        <strain>CT_02021853</strain>
    </source>
</reference>
<feature type="chain" id="PRO_1000130098" description="Ethanolamine ammonia-lyase small subunit">
    <location>
        <begin position="1"/>
        <end position="298"/>
    </location>
</feature>
<feature type="binding site" evidence="1">
    <location>
        <position position="210"/>
    </location>
    <ligand>
        <name>adenosylcob(III)alamin</name>
        <dbReference type="ChEBI" id="CHEBI:18408"/>
    </ligand>
</feature>
<feature type="binding site" evidence="1">
    <location>
        <position position="231"/>
    </location>
    <ligand>
        <name>adenosylcob(III)alamin</name>
        <dbReference type="ChEBI" id="CHEBI:18408"/>
    </ligand>
</feature>
<feature type="binding site" evidence="1">
    <location>
        <position position="261"/>
    </location>
    <ligand>
        <name>adenosylcob(III)alamin</name>
        <dbReference type="ChEBI" id="CHEBI:18408"/>
    </ligand>
</feature>
<keyword id="KW-1283">Bacterial microcompartment</keyword>
<keyword id="KW-0846">Cobalamin</keyword>
<keyword id="KW-0170">Cobalt</keyword>
<keyword id="KW-0456">Lyase</keyword>
<organism>
    <name type="scientific">Salmonella dublin (strain CT_02021853)</name>
    <dbReference type="NCBI Taxonomy" id="439851"/>
    <lineage>
        <taxon>Bacteria</taxon>
        <taxon>Pseudomonadati</taxon>
        <taxon>Pseudomonadota</taxon>
        <taxon>Gammaproteobacteria</taxon>
        <taxon>Enterobacterales</taxon>
        <taxon>Enterobacteriaceae</taxon>
        <taxon>Salmonella</taxon>
    </lineage>
</organism>
<proteinExistence type="inferred from homology"/>
<comment type="function">
    <text evidence="1">Catalyzes the deamination of various vicinal amino-alcohols to oxo compounds. Allows this organism to utilize ethanolamine as the sole source of nitrogen and carbon in the presence of external vitamin B12.</text>
</comment>
<comment type="catalytic activity">
    <reaction evidence="1">
        <text>ethanolamine = acetaldehyde + NH4(+)</text>
        <dbReference type="Rhea" id="RHEA:15313"/>
        <dbReference type="ChEBI" id="CHEBI:15343"/>
        <dbReference type="ChEBI" id="CHEBI:28938"/>
        <dbReference type="ChEBI" id="CHEBI:57603"/>
        <dbReference type="EC" id="4.3.1.7"/>
    </reaction>
</comment>
<comment type="cofactor">
    <cofactor evidence="1">
        <name>adenosylcob(III)alamin</name>
        <dbReference type="ChEBI" id="CHEBI:18408"/>
    </cofactor>
    <text evidence="1">Binds between the large and small subunits.</text>
</comment>
<comment type="pathway">
    <text evidence="1">Amine and polyamine degradation; ethanolamine degradation.</text>
</comment>
<comment type="subunit">
    <text evidence="1">The basic unit is a heterodimer which dimerizes to form tetramers. The heterotetramers trimerize; 6 large subunits form a core ring with 6 small subunits projecting outwards.</text>
</comment>
<comment type="subcellular location">
    <subcellularLocation>
        <location evidence="1">Bacterial microcompartment</location>
    </subcellularLocation>
</comment>
<comment type="similarity">
    <text evidence="1">Belongs to the EutC family.</text>
</comment>
<gene>
    <name evidence="1" type="primary">eutC</name>
    <name type="ordered locus">SeD_A2824</name>
</gene>
<sequence>MDQKQIEEIVRSVMASMGQDVPQPVAPSTQEGAKPQCAAPTVTESCALDLGSAEAKAWIGVENPHRADVLTELRRSTAARVCTGRAGPRPRTQALLRFLADHSRSKDTVLKEVPEEWVKAQGLLEVRSEISDKNLYLTRPDMGRRLSPEAIDALKSQCVMNPDVQVVVSDGLSTDAITANYEEILPPLLAGLKQAGLNVGTPFFVRYGRVKIEDQIGEILGAKVVILLVGERPGLGQSESLSCYAVYSPRVATTVEADRTCISNIHQGGTPPVEAAAVIVDLAKRMLEQKASGINMTR</sequence>
<accession>B5FQF0</accession>